<keyword id="KW-1003">Cell membrane</keyword>
<keyword id="KW-0966">Cell projection</keyword>
<keyword id="KW-1015">Disulfide bond</keyword>
<keyword id="KW-0325">Glycoprotein</keyword>
<keyword id="KW-0336">GPI-anchor</keyword>
<keyword id="KW-0433">Leucine-rich repeat</keyword>
<keyword id="KW-0449">Lipoprotein</keyword>
<keyword id="KW-0472">Membrane</keyword>
<keyword id="KW-0675">Receptor</keyword>
<keyword id="KW-1185">Reference proteome</keyword>
<keyword id="KW-0677">Repeat</keyword>
<keyword id="KW-0732">Signal</keyword>
<comment type="function">
    <text evidence="1 7 8 9 10">Cell surface receptor that plays a functionally redundant role in the inhibition of neurite outgrowth mediated by MAG (By similarity). Plays a functionally redundant role in postnatal brain development (PubMed:27339102). Contributes to normal axon migration across the brain midline and normal formation of the corpus callosum (PubMed:27339102). Does not seem to play a significant role in regulating axon regeneration in the adult central nervous system (PubMed:22406547). Protects motoneurons against apoptosis; protection against apoptosis is probably mediated by MAG (PubMed:26335717). Like other family members, plays a role in restricting the number dendritic spines and the number of synapses that are formed during brain development (PubMed:22325200). Signaling mediates activation of Rho and downstream reorganization of the actin cytoskeleton (PubMed:22325200).</text>
</comment>
<comment type="subunit">
    <text evidence="1 12">Interaction with MAG is controversial, and may be indirect (Probable). Interacts with MAG. Does not interact with OMG and RTN4 (By similarity).</text>
</comment>
<comment type="subcellular location">
    <subcellularLocation>
        <location evidence="2">Cell membrane</location>
        <topology evidence="2">Lipid-anchor</topology>
        <topology evidence="2">GPI-anchor</topology>
    </subcellularLocation>
    <subcellularLocation>
        <location evidence="1">Membrane raft</location>
    </subcellularLocation>
    <subcellularLocation>
        <location evidence="7">Cell projection</location>
        <location evidence="7">Dendrite</location>
    </subcellularLocation>
    <subcellularLocation>
        <location evidence="7">Cell projection</location>
        <location evidence="7">Axon</location>
    </subcellularLocation>
    <subcellularLocation>
        <location evidence="1">Perikaryon</location>
    </subcellularLocation>
    <text evidence="7">Localized to the surface of neurons, including axons. Detected close to synapses, but is excluded from synapses.</text>
</comment>
<comment type="tissue specificity">
    <text evidence="7 8">Detected in brain (PubMed:22406547). Detected in hippocampus neurons (at protein level) (PubMed:22325200).</text>
</comment>
<comment type="developmental stage">
    <text evidence="5">At 13.5 dpc, strongly expressed in PNS ganglia and developing heart, and weakly expressed in brain and spinal cord. By postnatal day 1, strongly expressed in dorsal root ganglia and in dorsal and gray matter areas of spinal cord. Expressed in various adult brain structures including the amygdala, cerebral cortex, cerebellum, hippocampus and olfactory bulb.</text>
</comment>
<comment type="PTM">
    <text evidence="2">Undergoes zinc metalloproteinase-mediated ectodomain shedding in neuroblastoma cells; is released both as a full-length ectodomain and an N-terminal fragment containing the leucine-rich repeat (LRR) region of the protein.</text>
</comment>
<comment type="PTM">
    <text evidence="2">N-glycosylated.</text>
</comment>
<comment type="disruption phenotype">
    <text evidence="6 7 8 9 10">No visible phenotype (PubMed:19367338). Mutant sensory neurons show no decrease of the inhibition of neurite outgrowth by MAG (PubMed:19367338). Compared to wild-type littermates, cultured hippocampus neurons from mutant mice display an increased number of excitatory synapses (PubMed:22325200). Likewise, mice lacking both Rtn4r and Rtn4rl2 display no visible phenotype (PubMed:19367338). Sensory neurons from mice lacking both Rtn4r and Rtn4rl2 show moderately decreased inhibition of neurite outgrowth by MAG (PubMed:19367338). Mice with a triple gene disruption that lack Rtn4r, Rtn4rl1 and Rtn4rl2 have no visible phenotype, are healthy and viable (PubMed:22325200, PubMed:22406547). Mice with a triple gene disruption that lack Rtn4r, Rtn4rl1 and Rtn4rl2 have normal brain size and grossly normal brain anatomy, but display disruption of medial brain structures, including an absence of the fasciola cinereum, corpus callosum agenesis and formation of bilateral Probst bundles indicative of the failure of callosally projecting neurons to extend across the midline (PubMed:27339102). Mice with a triple gene disruption of Rtn4r, Rtn4rl1 and Rtn4rl2 display impaired ability to stay on a rotarod and increased spontaneous locomotion (PubMed:27339102). These mice display an increased number of excitatory synapses in the apical dendritic regions of hippocampus neurons, an increase in the complexity of dendrite structure and increased total dendrite length (PubMed:22325200). One month after birth, mice with a triple gene disruption that lack Rtn4r, Rtn4rl1 and Rtn4rl2 show a significant reduction in the survival of motoneurons (PubMed:26335717). Compared to wild-type or single mutants, cerebellar granule cells from mice lacking Rtn4r, Rtn4rl1 and Rtn4rl2 show decreased myelin-mediated inhibition of neurite outgrowth, an inhibition that is strongly decreased on myelin deficient in Mag, Rtn4 and Omg (PubMed:22406547). Mice lacking both Rtn4r and Rtn4rl1 show increased axon regeneration after injury; the same effect is observed when Rtn4r, Rtn4rl1 and Rtn4rl2 are disrupted (PubMed:22406547). Combined disruption of Rtn4r, Rtn4rl1 and Ptprs further increases axon regeneration after injury (PubMed:22406547). Single gene disruption of Rtn4r, Rtn4rl1 and Rtn4rl2 and combined disruption of Rtn4r and Rtn4rl2 have no effect on axon regeneration (PubMed:22406547).</text>
</comment>
<comment type="similarity">
    <text evidence="12">Belongs to the Nogo receptor family.</text>
</comment>
<comment type="sequence caution" evidence="12">
    <conflict type="erroneous translation">
        <sequence resource="EMBL-CDS" id="BAE25181"/>
    </conflict>
    <text>Wrong choice of frame.</text>
</comment>
<proteinExistence type="evidence at protein level"/>
<accession>Q7M6Z0</accession>
<accession>A2RTJ0</accession>
<accession>Q3UQ62</accession>
<protein>
    <recommendedName>
        <fullName>Reticulon-4 receptor-like 2</fullName>
    </recommendedName>
    <alternativeName>
        <fullName>Nogo receptor-like 3</fullName>
    </alternativeName>
    <alternativeName>
        <fullName>Nogo-66 receptor homolog 1</fullName>
    </alternativeName>
    <alternativeName>
        <fullName>Nogo-66 receptor-related protein 2</fullName>
        <shortName evidence="11">NgR2</shortName>
    </alternativeName>
</protein>
<reference evidence="12 13" key="1">
    <citation type="journal article" date="2003" name="Mol. Cell. Neurosci.">
        <title>Two novel mammalian nogo receptor homologs differentially expressed in the central and peripheral nervous systems.</title>
        <authorList>
            <person name="Lauren J."/>
            <person name="Airaksinen M.S."/>
            <person name="Saarma M."/>
            <person name="Timmusk T."/>
        </authorList>
    </citation>
    <scope>NUCLEOTIDE SEQUENCE [MRNA]</scope>
    <scope>DEVELOPMENTAL STAGE</scope>
    <source>
        <tissue evidence="5">Brain</tissue>
    </source>
</reference>
<reference key="2">
    <citation type="journal article" date="2004" name="Genome Res.">
        <title>The status, quality, and expansion of the NIH full-length cDNA project: the Mammalian Gene Collection (MGC).</title>
        <authorList>
            <consortium name="The MGC Project Team"/>
        </authorList>
    </citation>
    <scope>NUCLEOTIDE SEQUENCE [LARGE SCALE MRNA]</scope>
    <source>
        <tissue>Brain</tissue>
    </source>
</reference>
<reference evidence="12 14" key="3">
    <citation type="journal article" date="2005" name="Science">
        <title>The transcriptional landscape of the mammalian genome.</title>
        <authorList>
            <person name="Carninci P."/>
            <person name="Kasukawa T."/>
            <person name="Katayama S."/>
            <person name="Gough J."/>
            <person name="Frith M.C."/>
            <person name="Maeda N."/>
            <person name="Oyama R."/>
            <person name="Ravasi T."/>
            <person name="Lenhard B."/>
            <person name="Wells C."/>
            <person name="Kodzius R."/>
            <person name="Shimokawa K."/>
            <person name="Bajic V.B."/>
            <person name="Brenner S.E."/>
            <person name="Batalov S."/>
            <person name="Forrest A.R."/>
            <person name="Zavolan M."/>
            <person name="Davis M.J."/>
            <person name="Wilming L.G."/>
            <person name="Aidinis V."/>
            <person name="Allen J.E."/>
            <person name="Ambesi-Impiombato A."/>
            <person name="Apweiler R."/>
            <person name="Aturaliya R.N."/>
            <person name="Bailey T.L."/>
            <person name="Bansal M."/>
            <person name="Baxter L."/>
            <person name="Beisel K.W."/>
            <person name="Bersano T."/>
            <person name="Bono H."/>
            <person name="Chalk A.M."/>
            <person name="Chiu K.P."/>
            <person name="Choudhary V."/>
            <person name="Christoffels A."/>
            <person name="Clutterbuck D.R."/>
            <person name="Crowe M.L."/>
            <person name="Dalla E."/>
            <person name="Dalrymple B.P."/>
            <person name="de Bono B."/>
            <person name="Della Gatta G."/>
            <person name="di Bernardo D."/>
            <person name="Down T."/>
            <person name="Engstrom P."/>
            <person name="Fagiolini M."/>
            <person name="Faulkner G."/>
            <person name="Fletcher C.F."/>
            <person name="Fukushima T."/>
            <person name="Furuno M."/>
            <person name="Futaki S."/>
            <person name="Gariboldi M."/>
            <person name="Georgii-Hemming P."/>
            <person name="Gingeras T.R."/>
            <person name="Gojobori T."/>
            <person name="Green R.E."/>
            <person name="Gustincich S."/>
            <person name="Harbers M."/>
            <person name="Hayashi Y."/>
            <person name="Hensch T.K."/>
            <person name="Hirokawa N."/>
            <person name="Hill D."/>
            <person name="Huminiecki L."/>
            <person name="Iacono M."/>
            <person name="Ikeo K."/>
            <person name="Iwama A."/>
            <person name="Ishikawa T."/>
            <person name="Jakt M."/>
            <person name="Kanapin A."/>
            <person name="Katoh M."/>
            <person name="Kawasawa Y."/>
            <person name="Kelso J."/>
            <person name="Kitamura H."/>
            <person name="Kitano H."/>
            <person name="Kollias G."/>
            <person name="Krishnan S.P."/>
            <person name="Kruger A."/>
            <person name="Kummerfeld S.K."/>
            <person name="Kurochkin I.V."/>
            <person name="Lareau L.F."/>
            <person name="Lazarevic D."/>
            <person name="Lipovich L."/>
            <person name="Liu J."/>
            <person name="Liuni S."/>
            <person name="McWilliam S."/>
            <person name="Madan Babu M."/>
            <person name="Madera M."/>
            <person name="Marchionni L."/>
            <person name="Matsuda H."/>
            <person name="Matsuzawa S."/>
            <person name="Miki H."/>
            <person name="Mignone F."/>
            <person name="Miyake S."/>
            <person name="Morris K."/>
            <person name="Mottagui-Tabar S."/>
            <person name="Mulder N."/>
            <person name="Nakano N."/>
            <person name="Nakauchi H."/>
            <person name="Ng P."/>
            <person name="Nilsson R."/>
            <person name="Nishiguchi S."/>
            <person name="Nishikawa S."/>
            <person name="Nori F."/>
            <person name="Ohara O."/>
            <person name="Okazaki Y."/>
            <person name="Orlando V."/>
            <person name="Pang K.C."/>
            <person name="Pavan W.J."/>
            <person name="Pavesi G."/>
            <person name="Pesole G."/>
            <person name="Petrovsky N."/>
            <person name="Piazza S."/>
            <person name="Reed J."/>
            <person name="Reid J.F."/>
            <person name="Ring B.Z."/>
            <person name="Ringwald M."/>
            <person name="Rost B."/>
            <person name="Ruan Y."/>
            <person name="Salzberg S.L."/>
            <person name="Sandelin A."/>
            <person name="Schneider C."/>
            <person name="Schoenbach C."/>
            <person name="Sekiguchi K."/>
            <person name="Semple C.A."/>
            <person name="Seno S."/>
            <person name="Sessa L."/>
            <person name="Sheng Y."/>
            <person name="Shibata Y."/>
            <person name="Shimada H."/>
            <person name="Shimada K."/>
            <person name="Silva D."/>
            <person name="Sinclair B."/>
            <person name="Sperling S."/>
            <person name="Stupka E."/>
            <person name="Sugiura K."/>
            <person name="Sultana R."/>
            <person name="Takenaka Y."/>
            <person name="Taki K."/>
            <person name="Tammoja K."/>
            <person name="Tan S.L."/>
            <person name="Tang S."/>
            <person name="Taylor M.S."/>
            <person name="Tegner J."/>
            <person name="Teichmann S.A."/>
            <person name="Ueda H.R."/>
            <person name="van Nimwegen E."/>
            <person name="Verardo R."/>
            <person name="Wei C.L."/>
            <person name="Yagi K."/>
            <person name="Yamanishi H."/>
            <person name="Zabarovsky E."/>
            <person name="Zhu S."/>
            <person name="Zimmer A."/>
            <person name="Hide W."/>
            <person name="Bult C."/>
            <person name="Grimmond S.M."/>
            <person name="Teasdale R.D."/>
            <person name="Liu E.T."/>
            <person name="Brusic V."/>
            <person name="Quackenbush J."/>
            <person name="Wahlestedt C."/>
            <person name="Mattick J.S."/>
            <person name="Hume D.A."/>
            <person name="Kai C."/>
            <person name="Sasaki D."/>
            <person name="Tomaru Y."/>
            <person name="Fukuda S."/>
            <person name="Kanamori-Katayama M."/>
            <person name="Suzuki M."/>
            <person name="Aoki J."/>
            <person name="Arakawa T."/>
            <person name="Iida J."/>
            <person name="Imamura K."/>
            <person name="Itoh M."/>
            <person name="Kato T."/>
            <person name="Kawaji H."/>
            <person name="Kawagashira N."/>
            <person name="Kawashima T."/>
            <person name="Kojima M."/>
            <person name="Kondo S."/>
            <person name="Konno H."/>
            <person name="Nakano K."/>
            <person name="Ninomiya N."/>
            <person name="Nishio T."/>
            <person name="Okada M."/>
            <person name="Plessy C."/>
            <person name="Shibata K."/>
            <person name="Shiraki T."/>
            <person name="Suzuki S."/>
            <person name="Tagami M."/>
            <person name="Waki K."/>
            <person name="Watahiki A."/>
            <person name="Okamura-Oho Y."/>
            <person name="Suzuki H."/>
            <person name="Kawai J."/>
            <person name="Hayashizaki Y."/>
        </authorList>
    </citation>
    <scope>NUCLEOTIDE SEQUENCE [LARGE SCALE MRNA] OF 379-420</scope>
    <source>
        <strain evidence="14">C57BL/6J</strain>
        <tissue evidence="14">Heart</tissue>
    </source>
</reference>
<reference evidence="15" key="4">
    <citation type="journal article" date="2003" name="EMBO J.">
        <title>Structure and axon outgrowth inhibitor binding of the Nogo-66 receptor and related proteins.</title>
        <authorList>
            <person name="Barton W.A."/>
            <person name="Liu B.P."/>
            <person name="Tzvetkova D."/>
            <person name="Jeffrey P.D."/>
            <person name="Fournier A.E."/>
            <person name="Sah D."/>
            <person name="Cate R."/>
            <person name="Strittmatter S.M."/>
            <person name="Nikolov D.B."/>
        </authorList>
    </citation>
    <scope>IDENTIFICATION</scope>
</reference>
<reference key="5">
    <citation type="journal article" date="2005" name="J. Neurosci.">
        <title>The Nogo-66 receptor homolog NgR2 is a sialic acid-dependent receptor selective for myelin-associated glycoprotein.</title>
        <authorList>
            <person name="Venkatesh K."/>
            <person name="Chivatakarn O."/>
            <person name="Lee H."/>
            <person name="Joshi P.S."/>
            <person name="Kantor D.B."/>
            <person name="Newman B.A."/>
            <person name="Mage R."/>
            <person name="Rader C."/>
            <person name="Giger R.J."/>
        </authorList>
    </citation>
    <scope>DISRUPTION PHENOTYPE</scope>
</reference>
<reference key="6">
    <citation type="journal article" date="2009" name="PLoS ONE">
        <title>Inhibitory activity of myelin-associated glycoprotein on sensory neurons is largely independent of NgR1 and NgR2 and resides within Ig-Like domains 4 and 5.</title>
        <authorList>
            <person name="Woerter V."/>
            <person name="Schweigreiter R."/>
            <person name="Kinzel B."/>
            <person name="Mueller M."/>
            <person name="Barske C."/>
            <person name="Boeck G."/>
            <person name="Frentzel S."/>
            <person name="Bandtlow C.E."/>
        </authorList>
    </citation>
    <scope>DISRUPTION PHENOTYPE</scope>
</reference>
<reference key="7">
    <citation type="journal article" date="2012" name="Nat. Neurosci.">
        <title>NgR1 and NgR3 are receptors for chondroitin sulfate proteoglycans.</title>
        <authorList>
            <person name="Dickendesher T.L."/>
            <person name="Baldwin K.T."/>
            <person name="Mironova Y.A."/>
            <person name="Koriyama Y."/>
            <person name="Raiker S.J."/>
            <person name="Askew K.L."/>
            <person name="Wood A."/>
            <person name="Geoffroy C.G."/>
            <person name="Zheng B."/>
            <person name="Liepmann C.D."/>
            <person name="Katagiri Y."/>
            <person name="Benowitz L.I."/>
            <person name="Geller H.M."/>
            <person name="Giger R.J."/>
        </authorList>
    </citation>
    <scope>DISRUPTION PHENOTYPE</scope>
    <scope>FUNCTION</scope>
</reference>
<reference key="8">
    <citation type="journal article" date="2012" name="Neuron">
        <title>The Nogo receptor family restricts synapse number in the developing hippocampus.</title>
        <authorList>
            <person name="Wills Z.P."/>
            <person name="Mandel-Brehm C."/>
            <person name="Mardinly A.R."/>
            <person name="McCord A.E."/>
            <person name="Giger R.J."/>
            <person name="Greenberg M.E."/>
        </authorList>
    </citation>
    <scope>DISRUPTION PHENOTYPE</scope>
    <scope>FUNCTION</scope>
    <scope>SUBCELLULAR LOCATION</scope>
    <scope>TISSUE SPECIFICITY</scope>
</reference>
<reference key="9">
    <citation type="journal article" date="2015" name="Cell Death Dis.">
        <title>Myelin-associated glycoprotein modulates apoptosis of motoneurons during early postnatal development via NgR/p75(NTR) receptor-mediated activation of RhoA signaling pathways.</title>
        <authorList>
            <person name="Palandri A."/>
            <person name="Salvador V.R."/>
            <person name="Wojnacki J."/>
            <person name="Vivinetto A.L."/>
            <person name="Schnaar R.L."/>
            <person name="Lopez P.H."/>
        </authorList>
    </citation>
    <scope>DISRUPTION PHENOTYPE</scope>
    <scope>FUNCTION</scope>
</reference>
<reference key="10">
    <citation type="journal article" date="2017" name="J. Comp. Neurol.">
        <title>Agenesis of the corpus callosum in Nogo receptor deficient mice.</title>
        <authorList>
            <person name="Yoo S.W."/>
            <person name="Motari M.G."/>
            <person name="Schnaar R.L."/>
        </authorList>
    </citation>
    <scope>DISRUPTION PHENOTYPE</scope>
    <scope>FUNCTION</scope>
</reference>
<dbReference type="EMBL" id="AY250220">
    <property type="protein sequence ID" value="AAP82837.1"/>
    <property type="molecule type" value="mRNA"/>
</dbReference>
<dbReference type="EMBL" id="BC132523">
    <property type="protein sequence ID" value="AAI32524.1"/>
    <property type="molecule type" value="mRNA"/>
</dbReference>
<dbReference type="EMBL" id="BC138154">
    <property type="protein sequence ID" value="AAI38155.1"/>
    <property type="molecule type" value="mRNA"/>
</dbReference>
<dbReference type="EMBL" id="AK142743">
    <property type="protein sequence ID" value="BAE25181.1"/>
    <property type="status" value="ALT_SEQ"/>
    <property type="molecule type" value="mRNA"/>
</dbReference>
<dbReference type="EMBL" id="BK001303">
    <property type="protein sequence ID" value="DAA01386.1"/>
    <property type="molecule type" value="mRNA"/>
</dbReference>
<dbReference type="CCDS" id="CCDS16197.1"/>
<dbReference type="RefSeq" id="NP_954693.1">
    <property type="nucleotide sequence ID" value="NM_199223.1"/>
</dbReference>
<dbReference type="SMR" id="Q7M6Z0"/>
<dbReference type="FunCoup" id="Q7M6Z0">
    <property type="interactions" value="53"/>
</dbReference>
<dbReference type="STRING" id="10090.ENSMUSP00000057725"/>
<dbReference type="GlyCosmos" id="Q7M6Z0">
    <property type="glycosylation" value="3 sites, No reported glycans"/>
</dbReference>
<dbReference type="GlyGen" id="Q7M6Z0">
    <property type="glycosylation" value="5 sites, 1 N-linked glycan (1 site)"/>
</dbReference>
<dbReference type="iPTMnet" id="Q7M6Z0"/>
<dbReference type="PhosphoSitePlus" id="Q7M6Z0"/>
<dbReference type="SwissPalm" id="Q7M6Z0"/>
<dbReference type="PaxDb" id="10090-ENSMUSP00000118362"/>
<dbReference type="ProteomicsDB" id="300369"/>
<dbReference type="ABCD" id="Q7M6Z0">
    <property type="antibodies" value="1 sequenced antibody"/>
</dbReference>
<dbReference type="Antibodypedia" id="62766">
    <property type="antibodies" value="148 antibodies from 23 providers"/>
</dbReference>
<dbReference type="Ensembl" id="ENSMUST00000054514.6">
    <property type="protein sequence ID" value="ENSMUSP00000057725.6"/>
    <property type="gene ID" value="ENSMUSG00000050896.13"/>
</dbReference>
<dbReference type="GeneID" id="269295"/>
<dbReference type="KEGG" id="mmu:269295"/>
<dbReference type="UCSC" id="uc008kjm.1">
    <property type="organism name" value="mouse"/>
</dbReference>
<dbReference type="AGR" id="MGI:2669796"/>
<dbReference type="CTD" id="349667"/>
<dbReference type="MGI" id="MGI:2669796">
    <property type="gene designation" value="Rtn4rl2"/>
</dbReference>
<dbReference type="VEuPathDB" id="HostDB:ENSMUSG00000050896"/>
<dbReference type="eggNOG" id="KOG0619">
    <property type="taxonomic scope" value="Eukaryota"/>
</dbReference>
<dbReference type="GeneTree" id="ENSGT00940000158505"/>
<dbReference type="HOGENOM" id="CLU_000288_18_6_1"/>
<dbReference type="InParanoid" id="Q7M6Z0"/>
<dbReference type="OMA" id="LHAVPTW"/>
<dbReference type="OrthoDB" id="643377at2759"/>
<dbReference type="Reactome" id="R-MMU-163125">
    <property type="pathway name" value="Post-translational modification: synthesis of GPI-anchored proteins"/>
</dbReference>
<dbReference type="BioGRID-ORCS" id="269295">
    <property type="hits" value="6 hits in 79 CRISPR screens"/>
</dbReference>
<dbReference type="PRO" id="PR:Q7M6Z0"/>
<dbReference type="Proteomes" id="UP000000589">
    <property type="component" value="Chromosome 2"/>
</dbReference>
<dbReference type="RNAct" id="Q7M6Z0">
    <property type="molecule type" value="protein"/>
</dbReference>
<dbReference type="Bgee" id="ENSMUSG00000050896">
    <property type="expression patterns" value="Expressed in lumbar dorsal root ganglion and 123 other cell types or tissues"/>
</dbReference>
<dbReference type="ExpressionAtlas" id="Q7M6Z0">
    <property type="expression patterns" value="baseline and differential"/>
</dbReference>
<dbReference type="GO" id="GO:0030424">
    <property type="term" value="C:axon"/>
    <property type="evidence" value="ECO:0000250"/>
    <property type="project" value="UniProtKB"/>
</dbReference>
<dbReference type="GO" id="GO:0009986">
    <property type="term" value="C:cell surface"/>
    <property type="evidence" value="ECO:0000250"/>
    <property type="project" value="UniProtKB"/>
</dbReference>
<dbReference type="GO" id="GO:0030425">
    <property type="term" value="C:dendrite"/>
    <property type="evidence" value="ECO:0007669"/>
    <property type="project" value="UniProtKB-SubCell"/>
</dbReference>
<dbReference type="GO" id="GO:0045121">
    <property type="term" value="C:membrane raft"/>
    <property type="evidence" value="ECO:0000250"/>
    <property type="project" value="UniProtKB"/>
</dbReference>
<dbReference type="GO" id="GO:0043005">
    <property type="term" value="C:neuron projection"/>
    <property type="evidence" value="ECO:0000250"/>
    <property type="project" value="UniProtKB"/>
</dbReference>
<dbReference type="GO" id="GO:0043204">
    <property type="term" value="C:perikaryon"/>
    <property type="evidence" value="ECO:0000250"/>
    <property type="project" value="UniProtKB"/>
</dbReference>
<dbReference type="GO" id="GO:0005886">
    <property type="term" value="C:plasma membrane"/>
    <property type="evidence" value="ECO:0000250"/>
    <property type="project" value="UniProtKB"/>
</dbReference>
<dbReference type="GO" id="GO:0098552">
    <property type="term" value="C:side of membrane"/>
    <property type="evidence" value="ECO:0007669"/>
    <property type="project" value="UniProtKB-KW"/>
</dbReference>
<dbReference type="GO" id="GO:0038023">
    <property type="term" value="F:signaling receptor activity"/>
    <property type="evidence" value="ECO:0000250"/>
    <property type="project" value="UniProtKB"/>
</dbReference>
<dbReference type="GO" id="GO:0031103">
    <property type="term" value="P:axon regeneration"/>
    <property type="evidence" value="ECO:0000304"/>
    <property type="project" value="UniProtKB"/>
</dbReference>
<dbReference type="GO" id="GO:0007166">
    <property type="term" value="P:cell surface receptor signaling pathway"/>
    <property type="evidence" value="ECO:0000250"/>
    <property type="project" value="UniProtKB"/>
</dbReference>
<dbReference type="GO" id="GO:0022038">
    <property type="term" value="P:corpus callosum development"/>
    <property type="evidence" value="ECO:0000315"/>
    <property type="project" value="UniProtKB"/>
</dbReference>
<dbReference type="GO" id="GO:0010977">
    <property type="term" value="P:negative regulation of neuron projection development"/>
    <property type="evidence" value="ECO:0000315"/>
    <property type="project" value="UniProtKB"/>
</dbReference>
<dbReference type="FunFam" id="3.80.10.10:FF:000018">
    <property type="entry name" value="Reticulon 4 receptor"/>
    <property type="match status" value="1"/>
</dbReference>
<dbReference type="Gene3D" id="3.80.10.10">
    <property type="entry name" value="Ribonuclease Inhibitor"/>
    <property type="match status" value="1"/>
</dbReference>
<dbReference type="InterPro" id="IPR000483">
    <property type="entry name" value="Cys-rich_flank_reg_C"/>
</dbReference>
<dbReference type="InterPro" id="IPR001611">
    <property type="entry name" value="Leu-rich_rpt"/>
</dbReference>
<dbReference type="InterPro" id="IPR003591">
    <property type="entry name" value="Leu-rich_rpt_typical-subtyp"/>
</dbReference>
<dbReference type="InterPro" id="IPR032675">
    <property type="entry name" value="LRR_dom_sf"/>
</dbReference>
<dbReference type="InterPro" id="IPR050541">
    <property type="entry name" value="LRR_TM_domain-containing"/>
</dbReference>
<dbReference type="PANTHER" id="PTHR24369">
    <property type="entry name" value="ANTIGEN BSP, PUTATIVE-RELATED"/>
    <property type="match status" value="1"/>
</dbReference>
<dbReference type="PANTHER" id="PTHR24369:SF196">
    <property type="entry name" value="RETICULON 4 RECEPTOR LIKE 1"/>
    <property type="match status" value="1"/>
</dbReference>
<dbReference type="Pfam" id="PF00560">
    <property type="entry name" value="LRR_1"/>
    <property type="match status" value="1"/>
</dbReference>
<dbReference type="Pfam" id="PF13855">
    <property type="entry name" value="LRR_8"/>
    <property type="match status" value="2"/>
</dbReference>
<dbReference type="SMART" id="SM00369">
    <property type="entry name" value="LRR_TYP"/>
    <property type="match status" value="8"/>
</dbReference>
<dbReference type="SMART" id="SM00082">
    <property type="entry name" value="LRRCT"/>
    <property type="match status" value="1"/>
</dbReference>
<dbReference type="SUPFAM" id="SSF52058">
    <property type="entry name" value="L domain-like"/>
    <property type="match status" value="1"/>
</dbReference>
<evidence type="ECO:0000250" key="1">
    <source>
        <dbReference type="UniProtKB" id="Q80WD1"/>
    </source>
</evidence>
<evidence type="ECO:0000250" key="2">
    <source>
        <dbReference type="UniProtKB" id="Q86UN3"/>
    </source>
</evidence>
<evidence type="ECO:0000255" key="3"/>
<evidence type="ECO:0000256" key="4">
    <source>
        <dbReference type="SAM" id="MobiDB-lite"/>
    </source>
</evidence>
<evidence type="ECO:0000269" key="5">
    <source>
    </source>
</evidence>
<evidence type="ECO:0000269" key="6">
    <source>
    </source>
</evidence>
<evidence type="ECO:0000269" key="7">
    <source>
    </source>
</evidence>
<evidence type="ECO:0000269" key="8">
    <source>
    </source>
</evidence>
<evidence type="ECO:0000269" key="9">
    <source>
    </source>
</evidence>
<evidence type="ECO:0000269" key="10">
    <source>
    </source>
</evidence>
<evidence type="ECO:0000303" key="11">
    <source>
    </source>
</evidence>
<evidence type="ECO:0000305" key="12"/>
<evidence type="ECO:0000312" key="13">
    <source>
        <dbReference type="EMBL" id="AAP82837.1"/>
    </source>
</evidence>
<evidence type="ECO:0000312" key="14">
    <source>
        <dbReference type="EMBL" id="BAE25181.1"/>
    </source>
</evidence>
<evidence type="ECO:0000312" key="15">
    <source>
        <dbReference type="EMBL" id="DAA01386.1"/>
    </source>
</evidence>
<evidence type="ECO:0000312" key="16">
    <source>
        <dbReference type="MGI" id="MGI:2669796"/>
    </source>
</evidence>
<organism>
    <name type="scientific">Mus musculus</name>
    <name type="common">Mouse</name>
    <dbReference type="NCBI Taxonomy" id="10090"/>
    <lineage>
        <taxon>Eukaryota</taxon>
        <taxon>Metazoa</taxon>
        <taxon>Chordata</taxon>
        <taxon>Craniata</taxon>
        <taxon>Vertebrata</taxon>
        <taxon>Euteleostomi</taxon>
        <taxon>Mammalia</taxon>
        <taxon>Eutheria</taxon>
        <taxon>Euarchontoglires</taxon>
        <taxon>Glires</taxon>
        <taxon>Rodentia</taxon>
        <taxon>Myomorpha</taxon>
        <taxon>Muroidea</taxon>
        <taxon>Muridae</taxon>
        <taxon>Murinae</taxon>
        <taxon>Mus</taxon>
        <taxon>Mus</taxon>
    </lineage>
</organism>
<feature type="signal peptide" evidence="3">
    <location>
        <begin position="1"/>
        <end position="30"/>
    </location>
</feature>
<feature type="chain" id="PRO_0000046050" description="Reticulon-4 receptor-like 2">
    <location>
        <begin position="31"/>
        <end position="398"/>
    </location>
</feature>
<feature type="propeptide" id="PRO_0000046051" description="Removed in mature form" evidence="3">
    <location>
        <begin position="399"/>
        <end position="420"/>
    </location>
</feature>
<feature type="domain" description="LRRNT">
    <location>
        <begin position="31"/>
        <end position="60"/>
    </location>
</feature>
<feature type="repeat" description="LRR 1">
    <location>
        <begin position="61"/>
        <end position="82"/>
    </location>
</feature>
<feature type="repeat" description="LRR 2">
    <location>
        <begin position="83"/>
        <end position="104"/>
    </location>
</feature>
<feature type="repeat" description="LRR 3">
    <location>
        <begin position="107"/>
        <end position="129"/>
    </location>
</feature>
<feature type="repeat" description="LRR 4">
    <location>
        <begin position="132"/>
        <end position="153"/>
    </location>
</feature>
<feature type="repeat" description="LRR 5">
    <location>
        <begin position="156"/>
        <end position="177"/>
    </location>
</feature>
<feature type="repeat" description="LRR 6">
    <location>
        <begin position="180"/>
        <end position="201"/>
    </location>
</feature>
<feature type="repeat" description="LRR 7">
    <location>
        <begin position="204"/>
        <end position="225"/>
    </location>
</feature>
<feature type="repeat" description="LRR 8">
    <location>
        <begin position="228"/>
        <end position="249"/>
    </location>
</feature>
<feature type="domain" description="LRRCT">
    <location>
        <begin position="261"/>
        <end position="312"/>
    </location>
</feature>
<feature type="region of interest" description="Disordered" evidence="4">
    <location>
        <begin position="286"/>
        <end position="399"/>
    </location>
</feature>
<feature type="region of interest" description="Important for interaction with MAG" evidence="1">
    <location>
        <begin position="315"/>
        <end position="327"/>
    </location>
</feature>
<feature type="compositionally biased region" description="Basic and acidic residues" evidence="4">
    <location>
        <begin position="294"/>
        <end position="306"/>
    </location>
</feature>
<feature type="compositionally biased region" description="Basic and acidic residues" evidence="4">
    <location>
        <begin position="351"/>
        <end position="360"/>
    </location>
</feature>
<feature type="lipid moiety-binding region" description="GPI-anchor amidated glycine" evidence="3">
    <location>
        <position position="398"/>
    </location>
</feature>
<feature type="glycosylation site" description="N-linked (GlcNAc...) asparagine" evidence="1">
    <location>
        <position position="50"/>
    </location>
</feature>
<feature type="glycosylation site" description="N-linked (GlcNAc...) asparagine" evidence="1">
    <location>
        <position position="93"/>
    </location>
</feature>
<feature type="glycosylation site" description="N-linked (GlcNAc...) asparagine" evidence="1">
    <location>
        <position position="236"/>
    </location>
</feature>
<feature type="disulfide bond" evidence="1">
    <location>
        <begin position="31"/>
        <end position="37"/>
    </location>
</feature>
<feature type="disulfide bond" evidence="1">
    <location>
        <begin position="35"/>
        <end position="46"/>
    </location>
</feature>
<feature type="disulfide bond" evidence="1">
    <location>
        <begin position="265"/>
        <end position="288"/>
    </location>
</feature>
<feature type="disulfide bond" evidence="1">
    <location>
        <begin position="267"/>
        <end position="310"/>
    </location>
</feature>
<name>R4RL2_MOUSE</name>
<gene>
    <name evidence="16" type="primary">Rtn4rl2</name>
    <name evidence="13" type="synonym">Ngrl3</name>
</gene>
<sequence>MLPGLRRLLQGPASACLLLTLLALPSVTPSCPMLCTCYSSPPTVSCQANNFSSVPLSLPPSTQRLFLQNNLIRSLRPGTFGPNLLTLWLFSNNLSTIHPGTFRHLQALEELDLGDNRHLRSLEPDTFQGLERLQSLHLYRCQLSSLPGNIFRGLVSLQYLYLQENSLLHLQDDLFADLANLSHLFLHGNRLRLLTEHVFRGLGSLDRLLLHGNRLQGVHRAAFHGLSRLTILYLFNNSLASLPGEALADLPALEFLRLNANPWACDCRARPLWAWFQRARVSSSDVTCATPPERQGRDLRALRDSDFQACPPPTPTRPGSRARGNSSSNHLYGVAEAGAPPADPSTLYRDLPAEDSRGRQGGDAPTEDDYWGGYGGEDQRGEQTCPGAACQAPADSRGPALSAGLRTPLLCLLPLALHHL</sequence>